<accession>E3X5D6</accession>
<accession>W5JLZ9</accession>
<comment type="function">
    <text evidence="1">Component of the spliceosomal U1 snRNP, which is essential for recognition of the pre-mRNA 5' splice-site and the subsequent assembly of the spliceosome. U1-C is directly involved in initial 5' splice-site recognition for both constitutive and regulated alternative splicing. The interaction with the 5' splice-site seems to precede base-pairing between the pre-mRNA and the U1 snRNA. Stimulates commitment or early (E) complex formation by stabilizing the base pairing of the 5' end of the U1 snRNA and the 5' splice-site region.</text>
</comment>
<comment type="subunit">
    <text evidence="1">U1 snRNP is composed of the 7 core Sm proteins B/B', D1, D2, D3, E, F and G that assemble in a heptameric protein ring on the Sm site of the small nuclear RNA to form the core snRNP, and at least 3 U1 snRNP-specific proteins U1-70K, U1-A and U1-C. U1-C interacts with U1 snRNA and the 5' splice-site region of the pre-mRNA.</text>
</comment>
<comment type="subcellular location">
    <subcellularLocation>
        <location evidence="1">Nucleus</location>
    </subcellularLocation>
</comment>
<comment type="similarity">
    <text evidence="1">Belongs to the U1 small nuclear ribonucleoprotein C family.</text>
</comment>
<keyword id="KW-0479">Metal-binding</keyword>
<keyword id="KW-0539">Nucleus</keyword>
<keyword id="KW-1185">Reference proteome</keyword>
<keyword id="KW-0687">Ribonucleoprotein</keyword>
<keyword id="KW-0694">RNA-binding</keyword>
<keyword id="KW-0862">Zinc</keyword>
<keyword id="KW-0863">Zinc-finger</keyword>
<reference key="1">
    <citation type="journal article" date="2010" name="BMC Genomics">
        <title>Combination of measures distinguishes pre-miRNAs from other stem-loops in the genome of the newly sequenced Anopheles darlingi.</title>
        <authorList>
            <person name="Mendes N.D."/>
            <person name="Freitas A.T."/>
            <person name="Vasconcelos A.T."/>
            <person name="Sagot M.F."/>
        </authorList>
    </citation>
    <scope>NUCLEOTIDE SEQUENCE [LARGE SCALE GENOMIC DNA]</scope>
</reference>
<sequence>MPKYYCDYCDTYLTHDSPSVRKTHCTGRKHKDNVKFYYQKWMEEQAQHLIDATTAAYKAGKIAQNPFTAGPPKPNISIPPPTMNMPPRPGIIPGMPAGAPPLLMGPNGPLPPPMMGMRPPPMMVPTMGMPPMGLGMRPPVMSAAPPQLNPK</sequence>
<name>RU1C_ANODA</name>
<feature type="chain" id="PRO_0000414259" description="U1 small nuclear ribonucleoprotein C">
    <location>
        <begin position="1"/>
        <end position="151"/>
    </location>
</feature>
<feature type="zinc finger region" description="Matrin-type" evidence="1">
    <location>
        <begin position="4"/>
        <end position="36"/>
    </location>
</feature>
<organism>
    <name type="scientific">Anopheles darlingi</name>
    <name type="common">Mosquito</name>
    <dbReference type="NCBI Taxonomy" id="43151"/>
    <lineage>
        <taxon>Eukaryota</taxon>
        <taxon>Metazoa</taxon>
        <taxon>Ecdysozoa</taxon>
        <taxon>Arthropoda</taxon>
        <taxon>Hexapoda</taxon>
        <taxon>Insecta</taxon>
        <taxon>Pterygota</taxon>
        <taxon>Neoptera</taxon>
        <taxon>Endopterygota</taxon>
        <taxon>Diptera</taxon>
        <taxon>Nematocera</taxon>
        <taxon>Culicoidea</taxon>
        <taxon>Culicidae</taxon>
        <taxon>Anophelinae</taxon>
        <taxon>Anopheles</taxon>
    </lineage>
</organism>
<protein>
    <recommendedName>
        <fullName evidence="1">U1 small nuclear ribonucleoprotein C</fullName>
        <shortName evidence="1">U1 snRNP C</shortName>
        <shortName evidence="1">U1-C</shortName>
        <shortName evidence="1">U1C</shortName>
    </recommendedName>
</protein>
<proteinExistence type="inferred from homology"/>
<gene>
    <name evidence="2" type="ORF">AND_004369</name>
</gene>
<dbReference type="EMBL" id="ADMH02001150">
    <property type="protein sequence ID" value="ETN63905.1"/>
    <property type="molecule type" value="Genomic_DNA"/>
</dbReference>
<dbReference type="FunCoup" id="E3X5D6">
    <property type="interactions" value="733"/>
</dbReference>
<dbReference type="STRING" id="43151.E3X5D6"/>
<dbReference type="EnsemblMetazoa" id="ADAC004369-RA">
    <property type="protein sequence ID" value="ADAC004369-PA"/>
    <property type="gene ID" value="ADAC004369"/>
</dbReference>
<dbReference type="VEuPathDB" id="VectorBase:ADAC004369"/>
<dbReference type="VEuPathDB" id="VectorBase:ADAR2_004547"/>
<dbReference type="eggNOG" id="KOG3454">
    <property type="taxonomic scope" value="Eukaryota"/>
</dbReference>
<dbReference type="HOGENOM" id="CLU_079697_3_1_1"/>
<dbReference type="InParanoid" id="E3X5D6"/>
<dbReference type="OMA" id="GCELFLA"/>
<dbReference type="OrthoDB" id="76567at2759"/>
<dbReference type="Proteomes" id="UP000000673">
    <property type="component" value="Unassembled WGS sequence"/>
</dbReference>
<dbReference type="GO" id="GO:0000243">
    <property type="term" value="C:commitment complex"/>
    <property type="evidence" value="ECO:0007669"/>
    <property type="project" value="UniProtKB-UniRule"/>
</dbReference>
<dbReference type="GO" id="GO:0005685">
    <property type="term" value="C:U1 snRNP"/>
    <property type="evidence" value="ECO:0007669"/>
    <property type="project" value="UniProtKB-UniRule"/>
</dbReference>
<dbReference type="GO" id="GO:0071004">
    <property type="term" value="C:U2-type prespliceosome"/>
    <property type="evidence" value="ECO:0007669"/>
    <property type="project" value="UniProtKB-UniRule"/>
</dbReference>
<dbReference type="GO" id="GO:0003729">
    <property type="term" value="F:mRNA binding"/>
    <property type="evidence" value="ECO:0007669"/>
    <property type="project" value="UniProtKB-UniRule"/>
</dbReference>
<dbReference type="GO" id="GO:0030627">
    <property type="term" value="F:pre-mRNA 5'-splice site binding"/>
    <property type="evidence" value="ECO:0007669"/>
    <property type="project" value="InterPro"/>
</dbReference>
<dbReference type="GO" id="GO:0030619">
    <property type="term" value="F:U1 snRNA binding"/>
    <property type="evidence" value="ECO:0007669"/>
    <property type="project" value="UniProtKB-UniRule"/>
</dbReference>
<dbReference type="GO" id="GO:0008270">
    <property type="term" value="F:zinc ion binding"/>
    <property type="evidence" value="ECO:0007669"/>
    <property type="project" value="UniProtKB-UniRule"/>
</dbReference>
<dbReference type="GO" id="GO:0000395">
    <property type="term" value="P:mRNA 5'-splice site recognition"/>
    <property type="evidence" value="ECO:0007669"/>
    <property type="project" value="UniProtKB-UniRule"/>
</dbReference>
<dbReference type="GO" id="GO:0000387">
    <property type="term" value="P:spliceosomal snRNP assembly"/>
    <property type="evidence" value="ECO:0007669"/>
    <property type="project" value="UniProtKB-UniRule"/>
</dbReference>
<dbReference type="FunFam" id="3.30.160.60:FF:000059">
    <property type="entry name" value="U1 small nuclear ribonucleoprotein C"/>
    <property type="match status" value="1"/>
</dbReference>
<dbReference type="Gene3D" id="3.30.160.60">
    <property type="entry name" value="Classic Zinc Finger"/>
    <property type="match status" value="1"/>
</dbReference>
<dbReference type="HAMAP" id="MF_03153">
    <property type="entry name" value="U1_C"/>
    <property type="match status" value="1"/>
</dbReference>
<dbReference type="InterPro" id="IPR000690">
    <property type="entry name" value="Matrin/U1-C_Znf_C2H2"/>
</dbReference>
<dbReference type="InterPro" id="IPR003604">
    <property type="entry name" value="Matrin/U1-like-C_Znf_C2H2"/>
</dbReference>
<dbReference type="InterPro" id="IPR013085">
    <property type="entry name" value="U1-CZ_Znf_C2H2"/>
</dbReference>
<dbReference type="InterPro" id="IPR017340">
    <property type="entry name" value="U1_snRNP-C"/>
</dbReference>
<dbReference type="InterPro" id="IPR036236">
    <property type="entry name" value="Znf_C2H2_sf"/>
</dbReference>
<dbReference type="PANTHER" id="PTHR31148">
    <property type="entry name" value="U1 SMALL NUCLEAR RIBONUCLEOPROTEIN C"/>
    <property type="match status" value="1"/>
</dbReference>
<dbReference type="PANTHER" id="PTHR31148:SF1">
    <property type="entry name" value="U1 SMALL NUCLEAR RIBONUCLEOPROTEIN C"/>
    <property type="match status" value="1"/>
</dbReference>
<dbReference type="Pfam" id="PF06220">
    <property type="entry name" value="zf-U1"/>
    <property type="match status" value="1"/>
</dbReference>
<dbReference type="PIRSF" id="PIRSF037969">
    <property type="entry name" value="U1_snRNP-C"/>
    <property type="match status" value="1"/>
</dbReference>
<dbReference type="SMART" id="SM00451">
    <property type="entry name" value="ZnF_U1"/>
    <property type="match status" value="1"/>
</dbReference>
<dbReference type="SUPFAM" id="SSF57667">
    <property type="entry name" value="beta-beta-alpha zinc fingers"/>
    <property type="match status" value="1"/>
</dbReference>
<dbReference type="PROSITE" id="PS50171">
    <property type="entry name" value="ZF_MATRIN"/>
    <property type="match status" value="1"/>
</dbReference>
<evidence type="ECO:0000255" key="1">
    <source>
        <dbReference type="HAMAP-Rule" id="MF_03153"/>
    </source>
</evidence>
<evidence type="ECO:0000312" key="2">
    <source>
        <dbReference type="EMBL" id="ETN63905.1"/>
    </source>
</evidence>